<accession>B1XB68</accession>
<reference key="1">
    <citation type="journal article" date="2008" name="J. Bacteriol.">
        <title>The complete genome sequence of Escherichia coli DH10B: insights into the biology of a laboratory workhorse.</title>
        <authorList>
            <person name="Durfee T."/>
            <person name="Nelson R."/>
            <person name="Baldwin S."/>
            <person name="Plunkett G. III"/>
            <person name="Burland V."/>
            <person name="Mau B."/>
            <person name="Petrosino J.F."/>
            <person name="Qin X."/>
            <person name="Muzny D.M."/>
            <person name="Ayele M."/>
            <person name="Gibbs R.A."/>
            <person name="Csorgo B."/>
            <person name="Posfai G."/>
            <person name="Weinstock G.M."/>
            <person name="Blattner F.R."/>
        </authorList>
    </citation>
    <scope>NUCLEOTIDE SEQUENCE [LARGE SCALE GENOMIC DNA]</scope>
    <source>
        <strain>K12 / DH10B</strain>
    </source>
</reference>
<comment type="function">
    <text evidence="1">Involved in the anomeric conversion of L-rhamnose.</text>
</comment>
<comment type="catalytic activity">
    <reaction evidence="1">
        <text>alpha-L-rhamnose = beta-L-rhamnose</text>
        <dbReference type="Rhea" id="RHEA:25584"/>
        <dbReference type="ChEBI" id="CHEBI:27586"/>
        <dbReference type="ChEBI" id="CHEBI:27907"/>
        <dbReference type="EC" id="5.1.3.32"/>
    </reaction>
</comment>
<comment type="pathway">
    <text evidence="1">Carbohydrate metabolism; L-rhamnose metabolism.</text>
</comment>
<comment type="subunit">
    <text evidence="1">Homodimer.</text>
</comment>
<comment type="subcellular location">
    <subcellularLocation>
        <location evidence="1">Cytoplasm</location>
    </subcellularLocation>
</comment>
<comment type="similarity">
    <text evidence="1">Belongs to the rhamnose mutarotase family.</text>
</comment>
<gene>
    <name evidence="1" type="primary">rhaM</name>
    <name type="ordered locus">ECDH10B_4091</name>
</gene>
<dbReference type="EC" id="5.1.3.32" evidence="1"/>
<dbReference type="EMBL" id="CP000948">
    <property type="protein sequence ID" value="ACB04914.1"/>
    <property type="molecule type" value="Genomic_DNA"/>
</dbReference>
<dbReference type="RefSeq" id="WP_000619493.1">
    <property type="nucleotide sequence ID" value="NC_010473.1"/>
</dbReference>
<dbReference type="SMR" id="B1XB68"/>
<dbReference type="GeneID" id="75174142"/>
<dbReference type="KEGG" id="ecd:ECDH10B_4091"/>
<dbReference type="HOGENOM" id="CLU_100689_2_0_6"/>
<dbReference type="UniPathway" id="UPA00125"/>
<dbReference type="GO" id="GO:0005737">
    <property type="term" value="C:cytoplasm"/>
    <property type="evidence" value="ECO:0007669"/>
    <property type="project" value="UniProtKB-SubCell"/>
</dbReference>
<dbReference type="GO" id="GO:0062192">
    <property type="term" value="F:L-rhamnose mutarotase activity"/>
    <property type="evidence" value="ECO:0007669"/>
    <property type="project" value="UniProtKB-EC"/>
</dbReference>
<dbReference type="GO" id="GO:0019301">
    <property type="term" value="P:rhamnose catabolic process"/>
    <property type="evidence" value="ECO:0007669"/>
    <property type="project" value="TreeGrafter"/>
</dbReference>
<dbReference type="FunFam" id="3.30.70.100:FF:000013">
    <property type="entry name" value="L-rhamnose mutarotase"/>
    <property type="match status" value="1"/>
</dbReference>
<dbReference type="Gene3D" id="3.30.70.100">
    <property type="match status" value="1"/>
</dbReference>
<dbReference type="HAMAP" id="MF_01663">
    <property type="entry name" value="L_rham_rotase"/>
    <property type="match status" value="1"/>
</dbReference>
<dbReference type="InterPro" id="IPR011008">
    <property type="entry name" value="Dimeric_a/b-barrel"/>
</dbReference>
<dbReference type="InterPro" id="IPR013448">
    <property type="entry name" value="L-rhamnose_mutarotase"/>
</dbReference>
<dbReference type="InterPro" id="IPR008000">
    <property type="entry name" value="Rham/fucose_mutarotase"/>
</dbReference>
<dbReference type="NCBIfam" id="TIGR02625">
    <property type="entry name" value="YiiL_rotase"/>
    <property type="match status" value="1"/>
</dbReference>
<dbReference type="PANTHER" id="PTHR34389">
    <property type="entry name" value="L-RHAMNOSE MUTAROTASE"/>
    <property type="match status" value="1"/>
</dbReference>
<dbReference type="PANTHER" id="PTHR34389:SF2">
    <property type="entry name" value="L-RHAMNOSE MUTAROTASE"/>
    <property type="match status" value="1"/>
</dbReference>
<dbReference type="Pfam" id="PF05336">
    <property type="entry name" value="rhaM"/>
    <property type="match status" value="1"/>
</dbReference>
<dbReference type="SUPFAM" id="SSF54909">
    <property type="entry name" value="Dimeric alpha+beta barrel"/>
    <property type="match status" value="1"/>
</dbReference>
<name>RHAM_ECODH</name>
<keyword id="KW-0119">Carbohydrate metabolism</keyword>
<keyword id="KW-0963">Cytoplasm</keyword>
<keyword id="KW-0413">Isomerase</keyword>
<keyword id="KW-0684">Rhamnose metabolism</keyword>
<protein>
    <recommendedName>
        <fullName evidence="1">L-rhamnose mutarotase</fullName>
        <ecNumber evidence="1">5.1.3.32</ecNumber>
    </recommendedName>
    <alternativeName>
        <fullName evidence="1">Rhamnose 1-epimerase</fullName>
    </alternativeName>
    <alternativeName>
        <fullName evidence="1">Type-3 mutarotase</fullName>
    </alternativeName>
</protein>
<organism>
    <name type="scientific">Escherichia coli (strain K12 / DH10B)</name>
    <dbReference type="NCBI Taxonomy" id="316385"/>
    <lineage>
        <taxon>Bacteria</taxon>
        <taxon>Pseudomonadati</taxon>
        <taxon>Pseudomonadota</taxon>
        <taxon>Gammaproteobacteria</taxon>
        <taxon>Enterobacterales</taxon>
        <taxon>Enterobacteriaceae</taxon>
        <taxon>Escherichia</taxon>
    </lineage>
</organism>
<feature type="chain" id="PRO_0000344570" description="L-rhamnose mutarotase">
    <location>
        <begin position="1"/>
        <end position="104"/>
    </location>
</feature>
<feature type="active site" description="Proton donor" evidence="1">
    <location>
        <position position="22"/>
    </location>
</feature>
<feature type="binding site" evidence="1">
    <location>
        <position position="18"/>
    </location>
    <ligand>
        <name>substrate</name>
    </ligand>
</feature>
<feature type="binding site" evidence="1">
    <location>
        <position position="41"/>
    </location>
    <ligand>
        <name>substrate</name>
    </ligand>
</feature>
<feature type="binding site" evidence="1">
    <location>
        <begin position="76"/>
        <end position="77"/>
    </location>
    <ligand>
        <name>substrate</name>
    </ligand>
</feature>
<proteinExistence type="inferred from homology"/>
<sequence length="104" mass="12265">MIRKAFVMQVNPDAHEEYQRRHNPIWPELEAVLKSHGAHNYAIYLDKARNLLFAMVEIESEERWNAVASTDVCQRWWKYMTDVMPANPDNSPVSSELQEVFYLP</sequence>
<evidence type="ECO:0000255" key="1">
    <source>
        <dbReference type="HAMAP-Rule" id="MF_01663"/>
    </source>
</evidence>